<proteinExistence type="inferred from homology"/>
<sequence>MRIELLNTPADALETRFEEQIRPIRMLDFAGQQRLTDNLRVFISAAKMRGDALDHVLLSGPPGLGKTTLAHIIAAEMGSSIKATSGPLLDKAGNLAGLLTGLQKGDVLFIDEIHRMPPAVEEYLYSAMEDFRIDIMLDSGPSARAVQLRIEPFTLVGATTRSGLLTSPLRARFGINSRFDYYSADLLEKIIIRASGILGIGVDQDAAAEIAGRSRGTPRIANRLLRRARDFAQVADAPLITRSIAMTTLDCLEIDEEGLDDMDKKIMDTIVNKFSGGPVGAASLAVSVGEEQDTIEEVYEPYLIQAGYIARTPRGRVATRRALLRFSVQESRGDGPLFEFPLEDDQRQ</sequence>
<dbReference type="EC" id="3.6.4.-" evidence="1"/>
<dbReference type="EMBL" id="CP001097">
    <property type="protein sequence ID" value="ACD89703.1"/>
    <property type="molecule type" value="Genomic_DNA"/>
</dbReference>
<dbReference type="RefSeq" id="WP_012465584.1">
    <property type="nucleotide sequence ID" value="NC_010803.1"/>
</dbReference>
<dbReference type="SMR" id="B3EH23"/>
<dbReference type="STRING" id="290315.Clim_0616"/>
<dbReference type="KEGG" id="cli:Clim_0616"/>
<dbReference type="eggNOG" id="COG2255">
    <property type="taxonomic scope" value="Bacteria"/>
</dbReference>
<dbReference type="HOGENOM" id="CLU_055599_1_0_10"/>
<dbReference type="OrthoDB" id="9804478at2"/>
<dbReference type="Proteomes" id="UP000008841">
    <property type="component" value="Chromosome"/>
</dbReference>
<dbReference type="GO" id="GO:0005737">
    <property type="term" value="C:cytoplasm"/>
    <property type="evidence" value="ECO:0007669"/>
    <property type="project" value="UniProtKB-SubCell"/>
</dbReference>
<dbReference type="GO" id="GO:0048476">
    <property type="term" value="C:Holliday junction resolvase complex"/>
    <property type="evidence" value="ECO:0007669"/>
    <property type="project" value="UniProtKB-UniRule"/>
</dbReference>
<dbReference type="GO" id="GO:0005524">
    <property type="term" value="F:ATP binding"/>
    <property type="evidence" value="ECO:0007669"/>
    <property type="project" value="UniProtKB-UniRule"/>
</dbReference>
<dbReference type="GO" id="GO:0016887">
    <property type="term" value="F:ATP hydrolysis activity"/>
    <property type="evidence" value="ECO:0007669"/>
    <property type="project" value="InterPro"/>
</dbReference>
<dbReference type="GO" id="GO:0000400">
    <property type="term" value="F:four-way junction DNA binding"/>
    <property type="evidence" value="ECO:0007669"/>
    <property type="project" value="UniProtKB-UniRule"/>
</dbReference>
<dbReference type="GO" id="GO:0009378">
    <property type="term" value="F:four-way junction helicase activity"/>
    <property type="evidence" value="ECO:0007669"/>
    <property type="project" value="InterPro"/>
</dbReference>
<dbReference type="GO" id="GO:0006310">
    <property type="term" value="P:DNA recombination"/>
    <property type="evidence" value="ECO:0007669"/>
    <property type="project" value="UniProtKB-UniRule"/>
</dbReference>
<dbReference type="GO" id="GO:0006281">
    <property type="term" value="P:DNA repair"/>
    <property type="evidence" value="ECO:0007669"/>
    <property type="project" value="UniProtKB-UniRule"/>
</dbReference>
<dbReference type="CDD" id="cd00009">
    <property type="entry name" value="AAA"/>
    <property type="match status" value="1"/>
</dbReference>
<dbReference type="Gene3D" id="1.10.8.60">
    <property type="match status" value="1"/>
</dbReference>
<dbReference type="Gene3D" id="3.40.50.300">
    <property type="entry name" value="P-loop containing nucleotide triphosphate hydrolases"/>
    <property type="match status" value="1"/>
</dbReference>
<dbReference type="Gene3D" id="1.10.10.10">
    <property type="entry name" value="Winged helix-like DNA-binding domain superfamily/Winged helix DNA-binding domain"/>
    <property type="match status" value="1"/>
</dbReference>
<dbReference type="HAMAP" id="MF_00016">
    <property type="entry name" value="DNA_HJ_migration_RuvB"/>
    <property type="match status" value="1"/>
</dbReference>
<dbReference type="InterPro" id="IPR003593">
    <property type="entry name" value="AAA+_ATPase"/>
</dbReference>
<dbReference type="InterPro" id="IPR041445">
    <property type="entry name" value="AAA_lid_4"/>
</dbReference>
<dbReference type="InterPro" id="IPR004605">
    <property type="entry name" value="DNA_helicase_Holl-junc_RuvB"/>
</dbReference>
<dbReference type="InterPro" id="IPR027417">
    <property type="entry name" value="P-loop_NTPase"/>
</dbReference>
<dbReference type="InterPro" id="IPR008824">
    <property type="entry name" value="RuvB-like_N"/>
</dbReference>
<dbReference type="InterPro" id="IPR008823">
    <property type="entry name" value="RuvB_C"/>
</dbReference>
<dbReference type="InterPro" id="IPR036388">
    <property type="entry name" value="WH-like_DNA-bd_sf"/>
</dbReference>
<dbReference type="InterPro" id="IPR036390">
    <property type="entry name" value="WH_DNA-bd_sf"/>
</dbReference>
<dbReference type="NCBIfam" id="NF000868">
    <property type="entry name" value="PRK00080.1"/>
    <property type="match status" value="1"/>
</dbReference>
<dbReference type="NCBIfam" id="TIGR00635">
    <property type="entry name" value="ruvB"/>
    <property type="match status" value="1"/>
</dbReference>
<dbReference type="PANTHER" id="PTHR42848">
    <property type="match status" value="1"/>
</dbReference>
<dbReference type="PANTHER" id="PTHR42848:SF1">
    <property type="entry name" value="HOLLIDAY JUNCTION BRANCH MIGRATION COMPLEX SUBUNIT RUVB"/>
    <property type="match status" value="1"/>
</dbReference>
<dbReference type="Pfam" id="PF17864">
    <property type="entry name" value="AAA_lid_4"/>
    <property type="match status" value="1"/>
</dbReference>
<dbReference type="Pfam" id="PF05491">
    <property type="entry name" value="RuvB_C"/>
    <property type="match status" value="1"/>
</dbReference>
<dbReference type="Pfam" id="PF05496">
    <property type="entry name" value="RuvB_N"/>
    <property type="match status" value="1"/>
</dbReference>
<dbReference type="SMART" id="SM00382">
    <property type="entry name" value="AAA"/>
    <property type="match status" value="1"/>
</dbReference>
<dbReference type="SUPFAM" id="SSF52540">
    <property type="entry name" value="P-loop containing nucleoside triphosphate hydrolases"/>
    <property type="match status" value="1"/>
</dbReference>
<dbReference type="SUPFAM" id="SSF46785">
    <property type="entry name" value="Winged helix' DNA-binding domain"/>
    <property type="match status" value="1"/>
</dbReference>
<comment type="function">
    <text evidence="1">The RuvA-RuvB-RuvC complex processes Holliday junction (HJ) DNA during genetic recombination and DNA repair, while the RuvA-RuvB complex plays an important role in the rescue of blocked DNA replication forks via replication fork reversal (RFR). RuvA specifically binds to HJ cruciform DNA, conferring on it an open structure. The RuvB hexamer acts as an ATP-dependent pump, pulling dsDNA into and through the RuvAB complex. RuvB forms 2 homohexamers on either side of HJ DNA bound by 1 or 2 RuvA tetramers; 4 subunits per hexamer contact DNA at a time. Coordinated motions by a converter formed by DNA-disengaged RuvB subunits stimulates ATP hydrolysis and nucleotide exchange. Immobilization of the converter enables RuvB to convert the ATP-contained energy into a lever motion, pulling 2 nucleotides of DNA out of the RuvA tetramer per ATP hydrolyzed, thus driving DNA branch migration. The RuvB motors rotate together with the DNA substrate, which together with the progressing nucleotide cycle form the mechanistic basis for DNA recombination by continuous HJ branch migration. Branch migration allows RuvC to scan DNA until it finds its consensus sequence, where it cleaves and resolves cruciform DNA.</text>
</comment>
<comment type="catalytic activity">
    <reaction evidence="1">
        <text>ATP + H2O = ADP + phosphate + H(+)</text>
        <dbReference type="Rhea" id="RHEA:13065"/>
        <dbReference type="ChEBI" id="CHEBI:15377"/>
        <dbReference type="ChEBI" id="CHEBI:15378"/>
        <dbReference type="ChEBI" id="CHEBI:30616"/>
        <dbReference type="ChEBI" id="CHEBI:43474"/>
        <dbReference type="ChEBI" id="CHEBI:456216"/>
    </reaction>
</comment>
<comment type="subunit">
    <text evidence="1">Homohexamer. Forms an RuvA(8)-RuvB(12)-Holliday junction (HJ) complex. HJ DNA is sandwiched between 2 RuvA tetramers; dsDNA enters through RuvA and exits via RuvB. An RuvB hexamer assembles on each DNA strand where it exits the tetramer. Each RuvB hexamer is contacted by two RuvA subunits (via domain III) on 2 adjacent RuvB subunits; this complex drives branch migration. In the full resolvosome a probable DNA-RuvA(4)-RuvB(12)-RuvC(2) complex forms which resolves the HJ.</text>
</comment>
<comment type="subcellular location">
    <subcellularLocation>
        <location evidence="1">Cytoplasm</location>
    </subcellularLocation>
</comment>
<comment type="domain">
    <text evidence="1">Has 3 domains, the large (RuvB-L) and small ATPase (RuvB-S) domains and the C-terminal head (RuvB-H) domain. The head domain binds DNA, while the ATPase domains jointly bind ATP, ADP or are empty depending on the state of the subunit in the translocation cycle. During a single DNA translocation step the structure of each domain remains the same, but their relative positions change.</text>
</comment>
<comment type="similarity">
    <text evidence="1">Belongs to the RuvB family.</text>
</comment>
<accession>B3EH23</accession>
<protein>
    <recommendedName>
        <fullName evidence="1">Holliday junction branch migration complex subunit RuvB</fullName>
        <ecNumber evidence="1">3.6.4.-</ecNumber>
    </recommendedName>
</protein>
<evidence type="ECO:0000255" key="1">
    <source>
        <dbReference type="HAMAP-Rule" id="MF_00016"/>
    </source>
</evidence>
<keyword id="KW-0067">ATP-binding</keyword>
<keyword id="KW-0963">Cytoplasm</keyword>
<keyword id="KW-0227">DNA damage</keyword>
<keyword id="KW-0233">DNA recombination</keyword>
<keyword id="KW-0234">DNA repair</keyword>
<keyword id="KW-0238">DNA-binding</keyword>
<keyword id="KW-0378">Hydrolase</keyword>
<keyword id="KW-0547">Nucleotide-binding</keyword>
<feature type="chain" id="PRO_1000089627" description="Holliday junction branch migration complex subunit RuvB">
    <location>
        <begin position="1"/>
        <end position="348"/>
    </location>
</feature>
<feature type="region of interest" description="Large ATPase domain (RuvB-L)" evidence="1">
    <location>
        <begin position="1"/>
        <end position="182"/>
    </location>
</feature>
<feature type="region of interest" description="Small ATPAse domain (RuvB-S)" evidence="1">
    <location>
        <begin position="183"/>
        <end position="253"/>
    </location>
</feature>
<feature type="region of interest" description="Head domain (RuvB-H)" evidence="1">
    <location>
        <begin position="256"/>
        <end position="348"/>
    </location>
</feature>
<feature type="binding site" evidence="1">
    <location>
        <position position="21"/>
    </location>
    <ligand>
        <name>ATP</name>
        <dbReference type="ChEBI" id="CHEBI:30616"/>
    </ligand>
</feature>
<feature type="binding site" evidence="1">
    <location>
        <position position="22"/>
    </location>
    <ligand>
        <name>ATP</name>
        <dbReference type="ChEBI" id="CHEBI:30616"/>
    </ligand>
</feature>
<feature type="binding site" evidence="1">
    <location>
        <position position="63"/>
    </location>
    <ligand>
        <name>ATP</name>
        <dbReference type="ChEBI" id="CHEBI:30616"/>
    </ligand>
</feature>
<feature type="binding site" evidence="1">
    <location>
        <position position="66"/>
    </location>
    <ligand>
        <name>ATP</name>
        <dbReference type="ChEBI" id="CHEBI:30616"/>
    </ligand>
</feature>
<feature type="binding site" evidence="1">
    <location>
        <position position="67"/>
    </location>
    <ligand>
        <name>ATP</name>
        <dbReference type="ChEBI" id="CHEBI:30616"/>
    </ligand>
</feature>
<feature type="binding site" evidence="1">
    <location>
        <position position="67"/>
    </location>
    <ligand>
        <name>Mg(2+)</name>
        <dbReference type="ChEBI" id="CHEBI:18420"/>
    </ligand>
</feature>
<feature type="binding site" evidence="1">
    <location>
        <position position="68"/>
    </location>
    <ligand>
        <name>ATP</name>
        <dbReference type="ChEBI" id="CHEBI:30616"/>
    </ligand>
</feature>
<feature type="binding site" evidence="1">
    <location>
        <begin position="129"/>
        <end position="131"/>
    </location>
    <ligand>
        <name>ATP</name>
        <dbReference type="ChEBI" id="CHEBI:30616"/>
    </ligand>
</feature>
<feature type="binding site" evidence="1">
    <location>
        <position position="172"/>
    </location>
    <ligand>
        <name>ATP</name>
        <dbReference type="ChEBI" id="CHEBI:30616"/>
    </ligand>
</feature>
<feature type="binding site" evidence="1">
    <location>
        <position position="182"/>
    </location>
    <ligand>
        <name>ATP</name>
        <dbReference type="ChEBI" id="CHEBI:30616"/>
    </ligand>
</feature>
<feature type="binding site" evidence="1">
    <location>
        <position position="219"/>
    </location>
    <ligand>
        <name>ATP</name>
        <dbReference type="ChEBI" id="CHEBI:30616"/>
    </ligand>
</feature>
<feature type="binding site" evidence="1">
    <location>
        <position position="311"/>
    </location>
    <ligand>
        <name>DNA</name>
        <dbReference type="ChEBI" id="CHEBI:16991"/>
    </ligand>
</feature>
<feature type="binding site" evidence="1">
    <location>
        <position position="316"/>
    </location>
    <ligand>
        <name>DNA</name>
        <dbReference type="ChEBI" id="CHEBI:16991"/>
    </ligand>
</feature>
<gene>
    <name evidence="1" type="primary">ruvB</name>
    <name type="ordered locus">Clim_0616</name>
</gene>
<organism>
    <name type="scientific">Chlorobium limicola (strain DSM 245 / NBRC 103803 / 6330)</name>
    <dbReference type="NCBI Taxonomy" id="290315"/>
    <lineage>
        <taxon>Bacteria</taxon>
        <taxon>Pseudomonadati</taxon>
        <taxon>Chlorobiota</taxon>
        <taxon>Chlorobiia</taxon>
        <taxon>Chlorobiales</taxon>
        <taxon>Chlorobiaceae</taxon>
        <taxon>Chlorobium/Pelodictyon group</taxon>
        <taxon>Chlorobium</taxon>
    </lineage>
</organism>
<name>RUVB_CHLL2</name>
<reference key="1">
    <citation type="submission" date="2008-05" db="EMBL/GenBank/DDBJ databases">
        <title>Complete sequence of Chlorobium limicola DSM 245.</title>
        <authorList>
            <consortium name="US DOE Joint Genome Institute"/>
            <person name="Lucas S."/>
            <person name="Copeland A."/>
            <person name="Lapidus A."/>
            <person name="Glavina del Rio T."/>
            <person name="Dalin E."/>
            <person name="Tice H."/>
            <person name="Bruce D."/>
            <person name="Goodwin L."/>
            <person name="Pitluck S."/>
            <person name="Schmutz J."/>
            <person name="Larimer F."/>
            <person name="Land M."/>
            <person name="Hauser L."/>
            <person name="Kyrpides N."/>
            <person name="Ovchinnikova G."/>
            <person name="Zhao F."/>
            <person name="Li T."/>
            <person name="Liu Z."/>
            <person name="Overmann J."/>
            <person name="Bryant D.A."/>
            <person name="Richardson P."/>
        </authorList>
    </citation>
    <scope>NUCLEOTIDE SEQUENCE [LARGE SCALE GENOMIC DNA]</scope>
    <source>
        <strain>DSM 245 / NBRC 103803 / 6330</strain>
    </source>
</reference>